<name>SECA_PELPB</name>
<evidence type="ECO:0000255" key="1">
    <source>
        <dbReference type="HAMAP-Rule" id="MF_01382"/>
    </source>
</evidence>
<evidence type="ECO:0000256" key="2">
    <source>
        <dbReference type="SAM" id="MobiDB-lite"/>
    </source>
</evidence>
<comment type="function">
    <text evidence="1">Part of the Sec protein translocase complex. Interacts with the SecYEG preprotein conducting channel. Has a central role in coupling the hydrolysis of ATP to the transfer of proteins into and across the cell membrane, serving as an ATP-driven molecular motor driving the stepwise translocation of polypeptide chains across the membrane.</text>
</comment>
<comment type="catalytic activity">
    <reaction evidence="1">
        <text>ATP + H2O + cellular proteinSide 1 = ADP + phosphate + cellular proteinSide 2.</text>
        <dbReference type="EC" id="7.4.2.8"/>
    </reaction>
</comment>
<comment type="cofactor">
    <cofactor evidence="1">
        <name>Zn(2+)</name>
        <dbReference type="ChEBI" id="CHEBI:29105"/>
    </cofactor>
    <text evidence="1">May bind 1 zinc ion per subunit.</text>
</comment>
<comment type="subunit">
    <text evidence="1">Monomer and homodimer. Part of the essential Sec protein translocation apparatus which comprises SecA, SecYEG and auxiliary proteins SecDF. Other proteins may also be involved.</text>
</comment>
<comment type="subcellular location">
    <subcellularLocation>
        <location evidence="1">Cell inner membrane</location>
        <topology evidence="1">Peripheral membrane protein</topology>
        <orientation evidence="1">Cytoplasmic side</orientation>
    </subcellularLocation>
    <subcellularLocation>
        <location evidence="1">Cytoplasm</location>
    </subcellularLocation>
    <text evidence="1">Distribution is 50-50.</text>
</comment>
<comment type="similarity">
    <text evidence="1">Belongs to the SecA family.</text>
</comment>
<organism>
    <name type="scientific">Pelodictyon phaeoclathratiforme (strain DSM 5477 / BU-1)</name>
    <dbReference type="NCBI Taxonomy" id="324925"/>
    <lineage>
        <taxon>Bacteria</taxon>
        <taxon>Pseudomonadati</taxon>
        <taxon>Chlorobiota</taxon>
        <taxon>Chlorobiia</taxon>
        <taxon>Chlorobiales</taxon>
        <taxon>Chlorobiaceae</taxon>
        <taxon>Chlorobium/Pelodictyon group</taxon>
        <taxon>Pelodictyon</taxon>
    </lineage>
</organism>
<gene>
    <name evidence="1" type="primary">secA</name>
    <name type="ordered locus">Ppha_1311</name>
</gene>
<feature type="chain" id="PRO_1000145039" description="Protein translocase subunit SecA">
    <location>
        <begin position="1"/>
        <end position="1024"/>
    </location>
</feature>
<feature type="region of interest" description="Disordered" evidence="2">
    <location>
        <begin position="970"/>
        <end position="1024"/>
    </location>
</feature>
<feature type="binding site" evidence="1">
    <location>
        <position position="143"/>
    </location>
    <ligand>
        <name>ATP</name>
        <dbReference type="ChEBI" id="CHEBI:30616"/>
    </ligand>
</feature>
<feature type="binding site" evidence="1">
    <location>
        <begin position="161"/>
        <end position="165"/>
    </location>
    <ligand>
        <name>ATP</name>
        <dbReference type="ChEBI" id="CHEBI:30616"/>
    </ligand>
</feature>
<feature type="binding site" evidence="1">
    <location>
        <position position="661"/>
    </location>
    <ligand>
        <name>ATP</name>
        <dbReference type="ChEBI" id="CHEBI:30616"/>
    </ligand>
</feature>
<feature type="binding site" evidence="1">
    <location>
        <position position="1008"/>
    </location>
    <ligand>
        <name>Zn(2+)</name>
        <dbReference type="ChEBI" id="CHEBI:29105"/>
    </ligand>
</feature>
<feature type="binding site" evidence="1">
    <location>
        <position position="1010"/>
    </location>
    <ligand>
        <name>Zn(2+)</name>
        <dbReference type="ChEBI" id="CHEBI:29105"/>
    </ligand>
</feature>
<feature type="binding site" evidence="1">
    <location>
        <position position="1019"/>
    </location>
    <ligand>
        <name>Zn(2+)</name>
        <dbReference type="ChEBI" id="CHEBI:29105"/>
    </ligand>
</feature>
<feature type="binding site" evidence="1">
    <location>
        <position position="1020"/>
    </location>
    <ligand>
        <name>Zn(2+)</name>
        <dbReference type="ChEBI" id="CHEBI:29105"/>
    </ligand>
</feature>
<reference key="1">
    <citation type="submission" date="2008-06" db="EMBL/GenBank/DDBJ databases">
        <title>Complete sequence of Pelodictyon phaeoclathratiforme BU-1.</title>
        <authorList>
            <consortium name="US DOE Joint Genome Institute"/>
            <person name="Lucas S."/>
            <person name="Copeland A."/>
            <person name="Lapidus A."/>
            <person name="Glavina del Rio T."/>
            <person name="Dalin E."/>
            <person name="Tice H."/>
            <person name="Bruce D."/>
            <person name="Goodwin L."/>
            <person name="Pitluck S."/>
            <person name="Schmutz J."/>
            <person name="Larimer F."/>
            <person name="Land M."/>
            <person name="Hauser L."/>
            <person name="Kyrpides N."/>
            <person name="Mikhailova N."/>
            <person name="Liu Z."/>
            <person name="Li T."/>
            <person name="Zhao F."/>
            <person name="Overmann J."/>
            <person name="Bryant D.A."/>
            <person name="Richardson P."/>
        </authorList>
    </citation>
    <scope>NUCLEOTIDE SEQUENCE [LARGE SCALE GENOMIC DNA]</scope>
    <source>
        <strain>DSM 5477 / BU-1</strain>
    </source>
</reference>
<sequence>MLKIFEKIFGSKHEKDIKKIRPLVSSINELQMTMASLSNDQLRERGVTLKQRVRKTLEPLEQEKTSLSRKLDNPDINLEEAETINTRLDTLAEEYEQATAAILEELLPETFALVKESCVRLKGHTYLVMGREMIWDMVPYDVQLIGGIVLHSGKISEMATGEGKTLVSTLPVFLNALTGRGVHVVTVNDYLAQRDKEWMSPVFAFHNLSVGVILNTMRPEERREQYACDITYGTNNEFGFDYLRDNMASTPEEMVQRNFYYAIVDEVDSVLIDEARTPLIISGPVPNADNSKFQEIKPWIEQLVRAQQQLVAKYLGEAEKLIKTKPGDPEAGLALLRVKRGQPKNTRYIKMLSQQGMAKLVQGTENEYLKDNSSRMQEVDDELYFAVDEKANTIDLTDKGRDFLSKLSHQDSDIFMLPDVGSEVAIIESDALIPVADKIQKKDEVYRLFADRSERLHNISQLLKAYSLFERDDEYVVQNGQVMIVDEFTGRILPGRRYSDGLHQAIEAKENVKIEGETQTMATITIQNFFRLYKKLAGMTGTAETEASEFYEIYKLDVVVIPTNASIVRKDMDDLVYKTRREKYNAVVLKVEELQKKGQPVLVGTTSVEVSETLSRMLRARKIVHNVLNARQNDREAEIVAEAGQKNAVTIATNMAGRGTDIKLGSGVRELGGLFILGSERHESRRIDRQLRGRAGRQGDPGESVFFVSLEDELMRLFGSDRVISVMDRLGHEEGDVIEHSMITKSIERAQKKVEEQNFSIRKRLLEYDDVLNQQREVIYSRRRNGLIKDRLTSDILDLLRDYSELVIKKHHKMLDVDAIEEQLMRELSIEFKPERNTFEREGIEATAEKLYQTALAFYRRKEAAMPEEIMQQIEKYAVLSVIDLRWREHLREIDSLREGINLRAYGQKDPLLEYKQEAFRLFIDLLHDIELETLSLAFKLFPVNPDEAREMEERQRKAAVRQEKLIAQHKAAESVYTASSDEPETNQEESPQQPAIAEKKPGRNDLCPCGSGKKYKNCHGQQP</sequence>
<dbReference type="EC" id="7.4.2.8" evidence="1"/>
<dbReference type="EMBL" id="CP001110">
    <property type="protein sequence ID" value="ACF43576.1"/>
    <property type="molecule type" value="Genomic_DNA"/>
</dbReference>
<dbReference type="RefSeq" id="WP_012508067.1">
    <property type="nucleotide sequence ID" value="NC_011060.1"/>
</dbReference>
<dbReference type="SMR" id="B4SHA9"/>
<dbReference type="STRING" id="324925.Ppha_1311"/>
<dbReference type="KEGG" id="pph:Ppha_1311"/>
<dbReference type="eggNOG" id="COG0653">
    <property type="taxonomic scope" value="Bacteria"/>
</dbReference>
<dbReference type="HOGENOM" id="CLU_005314_3_0_10"/>
<dbReference type="OrthoDB" id="9805579at2"/>
<dbReference type="Proteomes" id="UP000002724">
    <property type="component" value="Chromosome"/>
</dbReference>
<dbReference type="GO" id="GO:0031522">
    <property type="term" value="C:cell envelope Sec protein transport complex"/>
    <property type="evidence" value="ECO:0007669"/>
    <property type="project" value="TreeGrafter"/>
</dbReference>
<dbReference type="GO" id="GO:0005829">
    <property type="term" value="C:cytosol"/>
    <property type="evidence" value="ECO:0007669"/>
    <property type="project" value="TreeGrafter"/>
</dbReference>
<dbReference type="GO" id="GO:0005886">
    <property type="term" value="C:plasma membrane"/>
    <property type="evidence" value="ECO:0007669"/>
    <property type="project" value="UniProtKB-SubCell"/>
</dbReference>
<dbReference type="GO" id="GO:0005524">
    <property type="term" value="F:ATP binding"/>
    <property type="evidence" value="ECO:0007669"/>
    <property type="project" value="UniProtKB-UniRule"/>
</dbReference>
<dbReference type="GO" id="GO:0046872">
    <property type="term" value="F:metal ion binding"/>
    <property type="evidence" value="ECO:0007669"/>
    <property type="project" value="UniProtKB-KW"/>
</dbReference>
<dbReference type="GO" id="GO:0008564">
    <property type="term" value="F:protein-exporting ATPase activity"/>
    <property type="evidence" value="ECO:0007669"/>
    <property type="project" value="UniProtKB-EC"/>
</dbReference>
<dbReference type="GO" id="GO:0065002">
    <property type="term" value="P:intracellular protein transmembrane transport"/>
    <property type="evidence" value="ECO:0007669"/>
    <property type="project" value="UniProtKB-UniRule"/>
</dbReference>
<dbReference type="GO" id="GO:0017038">
    <property type="term" value="P:protein import"/>
    <property type="evidence" value="ECO:0007669"/>
    <property type="project" value="InterPro"/>
</dbReference>
<dbReference type="GO" id="GO:0006605">
    <property type="term" value="P:protein targeting"/>
    <property type="evidence" value="ECO:0007669"/>
    <property type="project" value="UniProtKB-UniRule"/>
</dbReference>
<dbReference type="GO" id="GO:0043952">
    <property type="term" value="P:protein transport by the Sec complex"/>
    <property type="evidence" value="ECO:0007669"/>
    <property type="project" value="TreeGrafter"/>
</dbReference>
<dbReference type="CDD" id="cd17928">
    <property type="entry name" value="DEXDc_SecA"/>
    <property type="match status" value="1"/>
</dbReference>
<dbReference type="CDD" id="cd18803">
    <property type="entry name" value="SF2_C_secA"/>
    <property type="match status" value="1"/>
</dbReference>
<dbReference type="FunFam" id="3.40.50.300:FF:000246">
    <property type="entry name" value="Preprotein translocase subunit SecA"/>
    <property type="match status" value="1"/>
</dbReference>
<dbReference type="FunFam" id="3.40.50.300:FF:000429">
    <property type="entry name" value="Preprotein translocase subunit SecA"/>
    <property type="match status" value="1"/>
</dbReference>
<dbReference type="Gene3D" id="1.10.3060.10">
    <property type="entry name" value="Helical scaffold and wing domains of SecA"/>
    <property type="match status" value="1"/>
</dbReference>
<dbReference type="Gene3D" id="3.40.50.300">
    <property type="entry name" value="P-loop containing nucleotide triphosphate hydrolases"/>
    <property type="match status" value="4"/>
</dbReference>
<dbReference type="Gene3D" id="3.90.1440.10">
    <property type="entry name" value="SecA, preprotein cross-linking domain"/>
    <property type="match status" value="1"/>
</dbReference>
<dbReference type="HAMAP" id="MF_01382">
    <property type="entry name" value="SecA"/>
    <property type="match status" value="1"/>
</dbReference>
<dbReference type="InterPro" id="IPR014001">
    <property type="entry name" value="Helicase_ATP-bd"/>
</dbReference>
<dbReference type="InterPro" id="IPR001650">
    <property type="entry name" value="Helicase_C-like"/>
</dbReference>
<dbReference type="InterPro" id="IPR027417">
    <property type="entry name" value="P-loop_NTPase"/>
</dbReference>
<dbReference type="InterPro" id="IPR004027">
    <property type="entry name" value="SEC_C_motif"/>
</dbReference>
<dbReference type="InterPro" id="IPR000185">
    <property type="entry name" value="SecA"/>
</dbReference>
<dbReference type="InterPro" id="IPR020937">
    <property type="entry name" value="SecA_CS"/>
</dbReference>
<dbReference type="InterPro" id="IPR011115">
    <property type="entry name" value="SecA_DEAD"/>
</dbReference>
<dbReference type="InterPro" id="IPR014018">
    <property type="entry name" value="SecA_motor_DEAD"/>
</dbReference>
<dbReference type="InterPro" id="IPR011130">
    <property type="entry name" value="SecA_preprotein_X-link_dom"/>
</dbReference>
<dbReference type="InterPro" id="IPR044722">
    <property type="entry name" value="SecA_SF2_C"/>
</dbReference>
<dbReference type="InterPro" id="IPR011116">
    <property type="entry name" value="SecA_Wing/Scaffold"/>
</dbReference>
<dbReference type="InterPro" id="IPR036266">
    <property type="entry name" value="SecA_Wing/Scaffold_sf"/>
</dbReference>
<dbReference type="InterPro" id="IPR036670">
    <property type="entry name" value="SecA_X-link_sf"/>
</dbReference>
<dbReference type="NCBIfam" id="TIGR00963">
    <property type="entry name" value="secA"/>
    <property type="match status" value="1"/>
</dbReference>
<dbReference type="PANTHER" id="PTHR30612:SF0">
    <property type="entry name" value="CHLOROPLAST PROTEIN-TRANSPORTING ATPASE"/>
    <property type="match status" value="1"/>
</dbReference>
<dbReference type="PANTHER" id="PTHR30612">
    <property type="entry name" value="SECA INNER MEMBRANE COMPONENT OF SEC PROTEIN SECRETION SYSTEM"/>
    <property type="match status" value="1"/>
</dbReference>
<dbReference type="Pfam" id="PF21090">
    <property type="entry name" value="P-loop_SecA"/>
    <property type="match status" value="2"/>
</dbReference>
<dbReference type="Pfam" id="PF02810">
    <property type="entry name" value="SEC-C"/>
    <property type="match status" value="1"/>
</dbReference>
<dbReference type="Pfam" id="PF07517">
    <property type="entry name" value="SecA_DEAD"/>
    <property type="match status" value="1"/>
</dbReference>
<dbReference type="Pfam" id="PF01043">
    <property type="entry name" value="SecA_PP_bind"/>
    <property type="match status" value="1"/>
</dbReference>
<dbReference type="Pfam" id="PF07516">
    <property type="entry name" value="SecA_SW"/>
    <property type="match status" value="1"/>
</dbReference>
<dbReference type="PRINTS" id="PR00906">
    <property type="entry name" value="SECA"/>
</dbReference>
<dbReference type="SMART" id="SM00957">
    <property type="entry name" value="SecA_DEAD"/>
    <property type="match status" value="1"/>
</dbReference>
<dbReference type="SMART" id="SM00958">
    <property type="entry name" value="SecA_PP_bind"/>
    <property type="match status" value="1"/>
</dbReference>
<dbReference type="SUPFAM" id="SSF81886">
    <property type="entry name" value="Helical scaffold and wing domains of SecA"/>
    <property type="match status" value="1"/>
</dbReference>
<dbReference type="SUPFAM" id="SSF52540">
    <property type="entry name" value="P-loop containing nucleoside triphosphate hydrolases"/>
    <property type="match status" value="2"/>
</dbReference>
<dbReference type="SUPFAM" id="SSF81767">
    <property type="entry name" value="Pre-protein crosslinking domain of SecA"/>
    <property type="match status" value="1"/>
</dbReference>
<dbReference type="PROSITE" id="PS01312">
    <property type="entry name" value="SECA"/>
    <property type="match status" value="1"/>
</dbReference>
<dbReference type="PROSITE" id="PS51196">
    <property type="entry name" value="SECA_MOTOR_DEAD"/>
    <property type="match status" value="1"/>
</dbReference>
<proteinExistence type="inferred from homology"/>
<keyword id="KW-0067">ATP-binding</keyword>
<keyword id="KW-0997">Cell inner membrane</keyword>
<keyword id="KW-1003">Cell membrane</keyword>
<keyword id="KW-0963">Cytoplasm</keyword>
<keyword id="KW-0472">Membrane</keyword>
<keyword id="KW-0479">Metal-binding</keyword>
<keyword id="KW-0547">Nucleotide-binding</keyword>
<keyword id="KW-0653">Protein transport</keyword>
<keyword id="KW-1185">Reference proteome</keyword>
<keyword id="KW-1278">Translocase</keyword>
<keyword id="KW-0811">Translocation</keyword>
<keyword id="KW-0813">Transport</keyword>
<keyword id="KW-0862">Zinc</keyword>
<accession>B4SHA9</accession>
<protein>
    <recommendedName>
        <fullName evidence="1">Protein translocase subunit SecA</fullName>
        <ecNumber evidence="1">7.4.2.8</ecNumber>
    </recommendedName>
</protein>